<comment type="function">
    <text evidence="1">Catalyzes the cleavage of the C5-C6 bond of 2-hydroxy-6-oxononadienedioate and 2-hydroxy-6-oxononatrienedioate, a dienol ring fission product of the bacterial meta-cleavage pathway for degradation of phenylpropionic acid.</text>
</comment>
<comment type="catalytic activity">
    <reaction evidence="1">
        <text>(2Z,4E)-2-hydroxy-6-oxonona-2,4-dienedioate + H2O = (2Z)-2-hydroxypenta-2,4-dienoate + succinate + H(+)</text>
        <dbReference type="Rhea" id="RHEA:34187"/>
        <dbReference type="ChEBI" id="CHEBI:15377"/>
        <dbReference type="ChEBI" id="CHEBI:15378"/>
        <dbReference type="ChEBI" id="CHEBI:30031"/>
        <dbReference type="ChEBI" id="CHEBI:66887"/>
        <dbReference type="ChEBI" id="CHEBI:67152"/>
        <dbReference type="EC" id="3.7.1.14"/>
    </reaction>
</comment>
<comment type="catalytic activity">
    <reaction evidence="1">
        <text>(2Z,4E,7E)-2-hydroxy-6-oxonona-2,4,7-trienedioate + H2O = (2Z)-2-hydroxypenta-2,4-dienoate + fumarate + H(+)</text>
        <dbReference type="Rhea" id="RHEA:34191"/>
        <dbReference type="ChEBI" id="CHEBI:15377"/>
        <dbReference type="ChEBI" id="CHEBI:15378"/>
        <dbReference type="ChEBI" id="CHEBI:29806"/>
        <dbReference type="ChEBI" id="CHEBI:66888"/>
        <dbReference type="ChEBI" id="CHEBI:67152"/>
        <dbReference type="EC" id="3.7.1.14"/>
    </reaction>
</comment>
<comment type="pathway">
    <text evidence="1">Aromatic compound metabolism; 3-phenylpropanoate degradation.</text>
</comment>
<comment type="subunit">
    <text evidence="1">Homodimer.</text>
</comment>
<comment type="similarity">
    <text evidence="1">Belongs to the AB hydrolase superfamily. MhpC family.</text>
</comment>
<gene>
    <name evidence="1" type="primary">mhpC2</name>
    <name type="synonym">orcC</name>
</gene>
<proteinExistence type="inferred from homology"/>
<protein>
    <recommendedName>
        <fullName evidence="1">2-hydroxy-6-oxononadienedioate/2-hydroxy-6-oxononatrienedioate hydrolase 2</fullName>
        <ecNumber evidence="1">3.7.1.14</ecNumber>
    </recommendedName>
    <alternativeName>
        <fullName evidence="1">2-hydroxy-6-ketonona-2,4-diene-1,9-dioic acid 5,6-hydrolase 2</fullName>
    </alternativeName>
    <alternativeName>
        <fullName evidence="1">2-hydroxy-6-oxonona-2,4,7-triene-1,9-dioic acid 5,6-hydrolase 2</fullName>
    </alternativeName>
    <alternativeName>
        <fullName evidence="1">2-hydroxy-6-oxonona-2,4-diene-1,9-dioic acid 5,6-hydrolase 2</fullName>
    </alternativeName>
</protein>
<name>MHPC2_PSEPU</name>
<organism>
    <name type="scientific">Pseudomonas putida</name>
    <name type="common">Arthrobacter siderocapsulatus</name>
    <dbReference type="NCBI Taxonomy" id="303"/>
    <lineage>
        <taxon>Bacteria</taxon>
        <taxon>Pseudomonadati</taxon>
        <taxon>Pseudomonadota</taxon>
        <taxon>Gammaproteobacteria</taxon>
        <taxon>Pseudomonadales</taxon>
        <taxon>Pseudomonadaceae</taxon>
        <taxon>Pseudomonas</taxon>
    </lineage>
</organism>
<reference key="1">
    <citation type="submission" date="2002-08" db="EMBL/GenBank/DDBJ databases">
        <title>Cloning of genes involved in meta-cleavage pathways of Pseudomonas putida orc: nucleotide sequences of genes, characterization of two dioxygenases and identification of the orcinol pathway.</title>
        <authorList>
            <person name="Straganz G.D."/>
            <person name="Glieder A."/>
            <person name="Steiner W."/>
        </authorList>
    </citation>
    <scope>NUCLEOTIDE SEQUENCE [GENOMIC DNA]</scope>
    <source>
        <strain>ORC</strain>
    </source>
</reference>
<accession>Q400K3</accession>
<keyword id="KW-0058">Aromatic hydrocarbons catabolism</keyword>
<keyword id="KW-0378">Hydrolase</keyword>
<sequence length="286" mass="31493">MTIDISEASSSRFARIREGELDLQLHYNDLGEGAETVVMLHGSGPGASGWANFSRNLEPLLAAGYRVVLMDCPGWSKSDPIVCRSSRSDLNATALKGLLDMLGLERVHILGNSMGAHSAVAFALANPRRVGKLVLMGGGTGGASPFVPMPTEGIKLLNGLYREPTIDNLKKMMNVFVYDASDLTEELFQTRLDNMLSRHEHLDNFVESLAANPRQFPDFGSRLAEIQAPTLIVWGRNDRFVPMDAGLRLLAGIPNSSLHVFNNCGHWAQWEHAEPFNRLVLDFLQH</sequence>
<dbReference type="EC" id="3.7.1.14" evidence="1"/>
<dbReference type="EMBL" id="AF534914">
    <property type="protein sequence ID" value="AAQ10535.1"/>
    <property type="molecule type" value="Genomic_DNA"/>
</dbReference>
<dbReference type="SMR" id="Q400K3"/>
<dbReference type="ESTHER" id="psepu-mhpc2">
    <property type="family name" value="Carbon-carbon_bond_hydrolase"/>
</dbReference>
<dbReference type="MEROPS" id="S33.995"/>
<dbReference type="UniPathway" id="UPA00714"/>
<dbReference type="GO" id="GO:0005737">
    <property type="term" value="C:cytoplasm"/>
    <property type="evidence" value="ECO:0007669"/>
    <property type="project" value="InterPro"/>
</dbReference>
<dbReference type="GO" id="GO:0052823">
    <property type="term" value="F:2-hydroxy-6-oxonona-2,4,7-trienedioate hydrolase activity"/>
    <property type="evidence" value="ECO:0007669"/>
    <property type="project" value="RHEA"/>
</dbReference>
<dbReference type="GO" id="GO:0018771">
    <property type="term" value="F:2-hydroxy-6-oxonona-2,4-dienedioate hydrolase activity"/>
    <property type="evidence" value="ECO:0007669"/>
    <property type="project" value="UniProtKB-UniRule"/>
</dbReference>
<dbReference type="GO" id="GO:0042803">
    <property type="term" value="F:protein homodimerization activity"/>
    <property type="evidence" value="ECO:0007669"/>
    <property type="project" value="InterPro"/>
</dbReference>
<dbReference type="GO" id="GO:0019380">
    <property type="term" value="P:3-phenylpropionate catabolic process"/>
    <property type="evidence" value="ECO:0007669"/>
    <property type="project" value="UniProtKB-UniRule"/>
</dbReference>
<dbReference type="Gene3D" id="3.40.50.1820">
    <property type="entry name" value="alpha/beta hydrolase"/>
    <property type="match status" value="1"/>
</dbReference>
<dbReference type="HAMAP" id="MF_01654">
    <property type="entry name" value="MhpC"/>
    <property type="match status" value="1"/>
</dbReference>
<dbReference type="InterPro" id="IPR000073">
    <property type="entry name" value="AB_hydrolase_1"/>
</dbReference>
<dbReference type="InterPro" id="IPR029058">
    <property type="entry name" value="AB_hydrolase_fold"/>
</dbReference>
<dbReference type="InterPro" id="IPR000639">
    <property type="entry name" value="Epox_hydrolase-like"/>
</dbReference>
<dbReference type="InterPro" id="IPR023791">
    <property type="entry name" value="MhpC_alpha/beta_hydrolase"/>
</dbReference>
<dbReference type="PANTHER" id="PTHR43689:SF8">
    <property type="entry name" value="ALPHA_BETA-HYDROLASES SUPERFAMILY PROTEIN"/>
    <property type="match status" value="1"/>
</dbReference>
<dbReference type="PANTHER" id="PTHR43689">
    <property type="entry name" value="HYDROLASE"/>
    <property type="match status" value="1"/>
</dbReference>
<dbReference type="Pfam" id="PF00561">
    <property type="entry name" value="Abhydrolase_1"/>
    <property type="match status" value="1"/>
</dbReference>
<dbReference type="PRINTS" id="PR00111">
    <property type="entry name" value="ABHYDROLASE"/>
</dbReference>
<dbReference type="PRINTS" id="PR00412">
    <property type="entry name" value="EPOXHYDRLASE"/>
</dbReference>
<dbReference type="SUPFAM" id="SSF53474">
    <property type="entry name" value="alpha/beta-Hydrolases"/>
    <property type="match status" value="1"/>
</dbReference>
<evidence type="ECO:0000255" key="1">
    <source>
        <dbReference type="HAMAP-Rule" id="MF_01654"/>
    </source>
</evidence>
<feature type="chain" id="PRO_0000337785" description="2-hydroxy-6-oxononadienedioate/2-hydroxy-6-oxononatrienedioate hydrolase 2">
    <location>
        <begin position="1"/>
        <end position="286"/>
    </location>
</feature>
<feature type="active site" description="Proton acceptor" evidence="1">
    <location>
        <position position="266"/>
    </location>
</feature>
<feature type="site" description="Transition state stabilizer" evidence="1">
    <location>
        <position position="113"/>
    </location>
</feature>
<feature type="site" description="Catalytic role in ketonization of the dienol substrate (substrate destabilization)" evidence="1">
    <location>
        <position position="191"/>
    </location>
</feature>